<comment type="function">
    <text evidence="1">Secreted metalloproteinase that allows assimilation of proteinaceous substrates. Shows high activities on basic nuclear substrates such as histone and protamine. May be involved in virulence (By similarity).</text>
</comment>
<comment type="catalytic activity">
    <reaction>
        <text>Preferential cleavage of bonds with hydrophobic residues in P1'. Also 3-Asn-|-Gln-4 and 8-Gly-|-Ser-9 bonds in insulin B chain.</text>
        <dbReference type="EC" id="3.4.24.39"/>
    </reaction>
</comment>
<comment type="cofactor">
    <cofactor evidence="1">
        <name>Zn(2+)</name>
        <dbReference type="ChEBI" id="CHEBI:29105"/>
    </cofactor>
    <text evidence="1">Binds 1 zinc ion per subunit.</text>
</comment>
<comment type="subcellular location">
    <subcellularLocation>
        <location evidence="1">Secreted</location>
    </subcellularLocation>
</comment>
<comment type="similarity">
    <text evidence="3">Belongs to the peptidase M35 family.</text>
</comment>
<proteinExistence type="inferred from homology"/>
<keyword id="KW-0165">Cleavage on pair of basic residues</keyword>
<keyword id="KW-1015">Disulfide bond</keyword>
<keyword id="KW-0378">Hydrolase</keyword>
<keyword id="KW-0479">Metal-binding</keyword>
<keyword id="KW-0482">Metalloprotease</keyword>
<keyword id="KW-0645">Protease</keyword>
<keyword id="KW-1185">Reference proteome</keyword>
<keyword id="KW-0964">Secreted</keyword>
<keyword id="KW-0732">Signal</keyword>
<keyword id="KW-0843">Virulence</keyword>
<keyword id="KW-0862">Zinc</keyword>
<keyword id="KW-0865">Zymogen</keyword>
<name>NPIIF_ARTBC</name>
<sequence length="378" mass="41956">MKFFTALAAVGALLAPAVALPTPASEASHNQTLSVRLVRAGHTMVRAIVTNNGERPLHLLSFNTIMDENPTSKVDVSHEDGGEVEFLGMLPRYDLSDLTEDLFTRLAPKDSVEHLFDIATVHDLKWDGKYTLTARGAIPVAEDGGTDIIDHVYYESNALEMDIDARKAAMVPRAFDDYFSKGLDKRRPLDICNPMKEKALRAALQDAQKVATEAAAAAQNNTEKVFEFFRARDPGTRKEVSKRLASISGVATMDGGSVTWFCSDGPRRCSPRIIAYTFPARNEVHPCSLFWQLPHRTNECHRQDRIGTVIHEGAHNPNAVTPHCKDHGYGYNRATALSHQRAMGNADNYALFANARQLVFCLLHLFLALPFIYIFANF</sequence>
<organism>
    <name type="scientific">Arthroderma benhamiae (strain ATCC MYA-4681 / CBS 112371)</name>
    <name type="common">Trichophyton mentagrophytes</name>
    <dbReference type="NCBI Taxonomy" id="663331"/>
    <lineage>
        <taxon>Eukaryota</taxon>
        <taxon>Fungi</taxon>
        <taxon>Dikarya</taxon>
        <taxon>Ascomycota</taxon>
        <taxon>Pezizomycotina</taxon>
        <taxon>Eurotiomycetes</taxon>
        <taxon>Eurotiomycetidae</taxon>
        <taxon>Onygenales</taxon>
        <taxon>Arthrodermataceae</taxon>
        <taxon>Trichophyton</taxon>
    </lineage>
</organism>
<reference key="1">
    <citation type="journal article" date="2011" name="Genome Biol.">
        <title>Comparative and functional genomics provide insights into the pathogenicity of dermatophytic fungi.</title>
        <authorList>
            <person name="Burmester A."/>
            <person name="Shelest E."/>
            <person name="Gloeckner G."/>
            <person name="Heddergott C."/>
            <person name="Schindler S."/>
            <person name="Staib P."/>
            <person name="Heidel A."/>
            <person name="Felder M."/>
            <person name="Petzold A."/>
            <person name="Szafranski K."/>
            <person name="Feuermann M."/>
            <person name="Pedruzzi I."/>
            <person name="Priebe S."/>
            <person name="Groth M."/>
            <person name="Winkler R."/>
            <person name="Li W."/>
            <person name="Kniemeyer O."/>
            <person name="Schroeckh V."/>
            <person name="Hertweck C."/>
            <person name="Hube B."/>
            <person name="White T.C."/>
            <person name="Platzer M."/>
            <person name="Guthke R."/>
            <person name="Heitman J."/>
            <person name="Woestemeyer J."/>
            <person name="Zipfel P.F."/>
            <person name="Monod M."/>
            <person name="Brakhage A.A."/>
        </authorList>
    </citation>
    <scope>NUCLEOTIDE SEQUENCE [LARGE SCALE GENOMIC DNA]</scope>
    <source>
        <strain>ATCC MYA-4681 / CBS 112371</strain>
    </source>
</reference>
<dbReference type="EC" id="3.4.24.39"/>
<dbReference type="EMBL" id="ABSU01000001">
    <property type="protein sequence ID" value="EFE36810.1"/>
    <property type="molecule type" value="Genomic_DNA"/>
</dbReference>
<dbReference type="RefSeq" id="XP_003017455.1">
    <property type="nucleotide sequence ID" value="XM_003017409.1"/>
</dbReference>
<dbReference type="SMR" id="D4AJ87"/>
<dbReference type="STRING" id="663331.D4AJ87"/>
<dbReference type="GeneID" id="9524565"/>
<dbReference type="KEGG" id="abe:ARB_04336"/>
<dbReference type="eggNOG" id="ENOG502SGF5">
    <property type="taxonomic scope" value="Eukaryota"/>
</dbReference>
<dbReference type="HOGENOM" id="CLU_039313_1_0_1"/>
<dbReference type="OMA" id="DGPLIAY"/>
<dbReference type="Proteomes" id="UP000008866">
    <property type="component" value="Unassembled WGS sequence"/>
</dbReference>
<dbReference type="GO" id="GO:0005576">
    <property type="term" value="C:extracellular region"/>
    <property type="evidence" value="ECO:0007669"/>
    <property type="project" value="UniProtKB-SubCell"/>
</dbReference>
<dbReference type="GO" id="GO:0046872">
    <property type="term" value="F:metal ion binding"/>
    <property type="evidence" value="ECO:0007669"/>
    <property type="project" value="UniProtKB-KW"/>
</dbReference>
<dbReference type="GO" id="GO:0004222">
    <property type="term" value="F:metalloendopeptidase activity"/>
    <property type="evidence" value="ECO:0007669"/>
    <property type="project" value="InterPro"/>
</dbReference>
<dbReference type="GO" id="GO:0006508">
    <property type="term" value="P:proteolysis"/>
    <property type="evidence" value="ECO:0007669"/>
    <property type="project" value="UniProtKB-KW"/>
</dbReference>
<dbReference type="CDD" id="cd11008">
    <property type="entry name" value="M35_deuterolysin_like"/>
    <property type="match status" value="1"/>
</dbReference>
<dbReference type="Gene3D" id="2.60.40.2970">
    <property type="match status" value="1"/>
</dbReference>
<dbReference type="Gene3D" id="3.40.390.10">
    <property type="entry name" value="Collagenase (Catalytic Domain)"/>
    <property type="match status" value="1"/>
</dbReference>
<dbReference type="InterPro" id="IPR050414">
    <property type="entry name" value="Fungal_M35_metalloproteases"/>
</dbReference>
<dbReference type="InterPro" id="IPR024079">
    <property type="entry name" value="MetalloPept_cat_dom_sf"/>
</dbReference>
<dbReference type="InterPro" id="IPR001384">
    <property type="entry name" value="Peptidase_M35"/>
</dbReference>
<dbReference type="PANTHER" id="PTHR37016">
    <property type="match status" value="1"/>
</dbReference>
<dbReference type="PANTHER" id="PTHR37016:SF3">
    <property type="entry name" value="NEUTRAL PROTEASE 2-RELATED"/>
    <property type="match status" value="1"/>
</dbReference>
<dbReference type="Pfam" id="PF02102">
    <property type="entry name" value="Peptidase_M35"/>
    <property type="match status" value="1"/>
</dbReference>
<dbReference type="PRINTS" id="PR00768">
    <property type="entry name" value="DEUTEROLYSIN"/>
</dbReference>
<dbReference type="SUPFAM" id="SSF55486">
    <property type="entry name" value="Metalloproteases ('zincins'), catalytic domain"/>
    <property type="match status" value="1"/>
</dbReference>
<accession>D4AJ87</accession>
<protein>
    <recommendedName>
        <fullName>Neutral protease 2 homolog ARB_04336</fullName>
        <ecNumber>3.4.24.39</ecNumber>
    </recommendedName>
    <alternativeName>
        <fullName>Deuterolysin ARB_04336</fullName>
    </alternativeName>
</protein>
<feature type="signal peptide" evidence="2">
    <location>
        <begin position="1"/>
        <end position="19"/>
    </location>
</feature>
<feature type="propeptide" id="PRO_0000407142" evidence="1">
    <location>
        <begin position="20"/>
        <end position="186"/>
    </location>
</feature>
<feature type="chain" id="PRO_0000407143" description="Neutral protease 2 homolog ARB_04336">
    <location>
        <begin position="187"/>
        <end position="378"/>
    </location>
</feature>
<feature type="active site" evidence="1">
    <location>
        <position position="312"/>
    </location>
</feature>
<feature type="binding site" evidence="1">
    <location>
        <position position="311"/>
    </location>
    <ligand>
        <name>Zn(2+)</name>
        <dbReference type="ChEBI" id="CHEBI:29105"/>
        <note>catalytic</note>
    </ligand>
</feature>
<feature type="binding site" evidence="1">
    <location>
        <position position="315"/>
    </location>
    <ligand>
        <name>Zn(2+)</name>
        <dbReference type="ChEBI" id="CHEBI:29105"/>
        <note>catalytic</note>
    </ligand>
</feature>
<feature type="binding site" evidence="1">
    <location>
        <position position="326"/>
    </location>
    <ligand>
        <name>Zn(2+)</name>
        <dbReference type="ChEBI" id="CHEBI:29105"/>
        <note>catalytic</note>
    </ligand>
</feature>
<feature type="disulfide bond" evidence="1">
    <location>
        <begin position="192"/>
        <end position="262"/>
    </location>
</feature>
<feature type="disulfide bond" evidence="1">
    <location>
        <begin position="269"/>
        <end position="287"/>
    </location>
</feature>
<evidence type="ECO:0000250" key="1"/>
<evidence type="ECO:0000255" key="2"/>
<evidence type="ECO:0000305" key="3"/>
<gene>
    <name type="ORF">ARB_04336</name>
</gene>